<feature type="chain" id="PRO_1000098091" description="Serine--tRNA ligase">
    <location>
        <begin position="1"/>
        <end position="428"/>
    </location>
</feature>
<feature type="binding site" evidence="1">
    <location>
        <begin position="231"/>
        <end position="233"/>
    </location>
    <ligand>
        <name>L-serine</name>
        <dbReference type="ChEBI" id="CHEBI:33384"/>
    </ligand>
</feature>
<feature type="binding site" evidence="1">
    <location>
        <begin position="262"/>
        <end position="264"/>
    </location>
    <ligand>
        <name>ATP</name>
        <dbReference type="ChEBI" id="CHEBI:30616"/>
    </ligand>
</feature>
<feature type="binding site" evidence="1">
    <location>
        <position position="285"/>
    </location>
    <ligand>
        <name>L-serine</name>
        <dbReference type="ChEBI" id="CHEBI:33384"/>
    </ligand>
</feature>
<feature type="binding site" evidence="1">
    <location>
        <begin position="349"/>
        <end position="352"/>
    </location>
    <ligand>
        <name>ATP</name>
        <dbReference type="ChEBI" id="CHEBI:30616"/>
    </ligand>
</feature>
<feature type="binding site" evidence="1">
    <location>
        <position position="385"/>
    </location>
    <ligand>
        <name>L-serine</name>
        <dbReference type="ChEBI" id="CHEBI:33384"/>
    </ligand>
</feature>
<protein>
    <recommendedName>
        <fullName evidence="1">Serine--tRNA ligase</fullName>
        <ecNumber evidence="1">6.1.1.11</ecNumber>
    </recommendedName>
    <alternativeName>
        <fullName evidence="1">Seryl-tRNA synthetase</fullName>
        <shortName evidence="1">SerRS</shortName>
    </alternativeName>
    <alternativeName>
        <fullName evidence="1">Seryl-tRNA(Ser/Sec) synthetase</fullName>
    </alternativeName>
</protein>
<dbReference type="EC" id="6.1.1.11" evidence="1"/>
<dbReference type="EMBL" id="CP000908">
    <property type="protein sequence ID" value="ABY32603.1"/>
    <property type="molecule type" value="Genomic_DNA"/>
</dbReference>
<dbReference type="RefSeq" id="WP_012255350.1">
    <property type="nucleotide sequence ID" value="NC_010172.1"/>
</dbReference>
<dbReference type="SMR" id="A9VY49"/>
<dbReference type="KEGG" id="mex:Mext_4234"/>
<dbReference type="eggNOG" id="COG0172">
    <property type="taxonomic scope" value="Bacteria"/>
</dbReference>
<dbReference type="HOGENOM" id="CLU_023797_1_1_5"/>
<dbReference type="BioCyc" id="MEXT419610:MEXT_RS21270-MONOMER"/>
<dbReference type="UniPathway" id="UPA00906">
    <property type="reaction ID" value="UER00895"/>
</dbReference>
<dbReference type="GO" id="GO:0005737">
    <property type="term" value="C:cytoplasm"/>
    <property type="evidence" value="ECO:0007669"/>
    <property type="project" value="UniProtKB-SubCell"/>
</dbReference>
<dbReference type="GO" id="GO:0005524">
    <property type="term" value="F:ATP binding"/>
    <property type="evidence" value="ECO:0007669"/>
    <property type="project" value="UniProtKB-UniRule"/>
</dbReference>
<dbReference type="GO" id="GO:0004828">
    <property type="term" value="F:serine-tRNA ligase activity"/>
    <property type="evidence" value="ECO:0007669"/>
    <property type="project" value="UniProtKB-UniRule"/>
</dbReference>
<dbReference type="GO" id="GO:0016260">
    <property type="term" value="P:selenocysteine biosynthetic process"/>
    <property type="evidence" value="ECO:0007669"/>
    <property type="project" value="UniProtKB-UniRule"/>
</dbReference>
<dbReference type="GO" id="GO:0006434">
    <property type="term" value="P:seryl-tRNA aminoacylation"/>
    <property type="evidence" value="ECO:0007669"/>
    <property type="project" value="UniProtKB-UniRule"/>
</dbReference>
<dbReference type="CDD" id="cd00770">
    <property type="entry name" value="SerRS_core"/>
    <property type="match status" value="1"/>
</dbReference>
<dbReference type="Gene3D" id="3.30.930.10">
    <property type="entry name" value="Bira Bifunctional Protein, Domain 2"/>
    <property type="match status" value="1"/>
</dbReference>
<dbReference type="Gene3D" id="1.10.287.40">
    <property type="entry name" value="Serine-tRNA synthetase, tRNA binding domain"/>
    <property type="match status" value="1"/>
</dbReference>
<dbReference type="HAMAP" id="MF_00176">
    <property type="entry name" value="Ser_tRNA_synth_type1"/>
    <property type="match status" value="1"/>
</dbReference>
<dbReference type="InterPro" id="IPR002314">
    <property type="entry name" value="aa-tRNA-synt_IIb"/>
</dbReference>
<dbReference type="InterPro" id="IPR006195">
    <property type="entry name" value="aa-tRNA-synth_II"/>
</dbReference>
<dbReference type="InterPro" id="IPR045864">
    <property type="entry name" value="aa-tRNA-synth_II/BPL/LPL"/>
</dbReference>
<dbReference type="InterPro" id="IPR002317">
    <property type="entry name" value="Ser-tRNA-ligase_type_1"/>
</dbReference>
<dbReference type="InterPro" id="IPR015866">
    <property type="entry name" value="Ser-tRNA-synth_1_N"/>
</dbReference>
<dbReference type="InterPro" id="IPR042103">
    <property type="entry name" value="SerRS_1_N_sf"/>
</dbReference>
<dbReference type="InterPro" id="IPR033729">
    <property type="entry name" value="SerRS_core"/>
</dbReference>
<dbReference type="InterPro" id="IPR010978">
    <property type="entry name" value="tRNA-bd_arm"/>
</dbReference>
<dbReference type="NCBIfam" id="TIGR00414">
    <property type="entry name" value="serS"/>
    <property type="match status" value="1"/>
</dbReference>
<dbReference type="PANTHER" id="PTHR43697:SF1">
    <property type="entry name" value="SERINE--TRNA LIGASE"/>
    <property type="match status" value="1"/>
</dbReference>
<dbReference type="PANTHER" id="PTHR43697">
    <property type="entry name" value="SERYL-TRNA SYNTHETASE"/>
    <property type="match status" value="1"/>
</dbReference>
<dbReference type="Pfam" id="PF02403">
    <property type="entry name" value="Seryl_tRNA_N"/>
    <property type="match status" value="1"/>
</dbReference>
<dbReference type="Pfam" id="PF00587">
    <property type="entry name" value="tRNA-synt_2b"/>
    <property type="match status" value="1"/>
</dbReference>
<dbReference type="PIRSF" id="PIRSF001529">
    <property type="entry name" value="Ser-tRNA-synth_IIa"/>
    <property type="match status" value="1"/>
</dbReference>
<dbReference type="PRINTS" id="PR00981">
    <property type="entry name" value="TRNASYNTHSER"/>
</dbReference>
<dbReference type="SUPFAM" id="SSF55681">
    <property type="entry name" value="Class II aaRS and biotin synthetases"/>
    <property type="match status" value="1"/>
</dbReference>
<dbReference type="SUPFAM" id="SSF46589">
    <property type="entry name" value="tRNA-binding arm"/>
    <property type="match status" value="1"/>
</dbReference>
<dbReference type="PROSITE" id="PS50862">
    <property type="entry name" value="AA_TRNA_LIGASE_II"/>
    <property type="match status" value="1"/>
</dbReference>
<sequence length="428" mass="47062">MHDIRAIRENPEAFDRDLERRGLAPLSAELIALDDARKGAVSAAQAAQERRNALSKEIGAAKKAKDEARATELMAEVARLKEEAPGLEAAQGEAAKALDERLAAIPNRPKDDVPPGADEHGNVEYRRFDSSRERLAQGRQHFELGEATGLMDFEAAAKLSGSRFVVLKGQLARLERALGQFMLDLHTGEHGYTEVVPPVLVREEAMFGTAQLPKFRDDQFAAGENFWLIPTAEVPLTNLVRESILAEDELPLRFTALTPCFRAEAGAAGRDTRGMLRQHQFNKVELVSITAPEKSAEEHERMLACAEAVLQKLDLTYRVMTLCTGDMGFASQKTYDIEVWVPGQQTYREISSCSVCGEFQARRMNARYRAKEGRGVGFVHTLNGSGVAVGRALIAVMENYQNPDGSVTIPSALQPYMGGLTRIEGPKN</sequence>
<accession>A9VY49</accession>
<comment type="function">
    <text evidence="1">Catalyzes the attachment of serine to tRNA(Ser). Is also able to aminoacylate tRNA(Sec) with serine, to form the misacylated tRNA L-seryl-tRNA(Sec), which will be further converted into selenocysteinyl-tRNA(Sec).</text>
</comment>
<comment type="catalytic activity">
    <reaction evidence="1">
        <text>tRNA(Ser) + L-serine + ATP = L-seryl-tRNA(Ser) + AMP + diphosphate + H(+)</text>
        <dbReference type="Rhea" id="RHEA:12292"/>
        <dbReference type="Rhea" id="RHEA-COMP:9669"/>
        <dbReference type="Rhea" id="RHEA-COMP:9703"/>
        <dbReference type="ChEBI" id="CHEBI:15378"/>
        <dbReference type="ChEBI" id="CHEBI:30616"/>
        <dbReference type="ChEBI" id="CHEBI:33019"/>
        <dbReference type="ChEBI" id="CHEBI:33384"/>
        <dbReference type="ChEBI" id="CHEBI:78442"/>
        <dbReference type="ChEBI" id="CHEBI:78533"/>
        <dbReference type="ChEBI" id="CHEBI:456215"/>
        <dbReference type="EC" id="6.1.1.11"/>
    </reaction>
</comment>
<comment type="catalytic activity">
    <reaction evidence="1">
        <text>tRNA(Sec) + L-serine + ATP = L-seryl-tRNA(Sec) + AMP + diphosphate + H(+)</text>
        <dbReference type="Rhea" id="RHEA:42580"/>
        <dbReference type="Rhea" id="RHEA-COMP:9742"/>
        <dbReference type="Rhea" id="RHEA-COMP:10128"/>
        <dbReference type="ChEBI" id="CHEBI:15378"/>
        <dbReference type="ChEBI" id="CHEBI:30616"/>
        <dbReference type="ChEBI" id="CHEBI:33019"/>
        <dbReference type="ChEBI" id="CHEBI:33384"/>
        <dbReference type="ChEBI" id="CHEBI:78442"/>
        <dbReference type="ChEBI" id="CHEBI:78533"/>
        <dbReference type="ChEBI" id="CHEBI:456215"/>
        <dbReference type="EC" id="6.1.1.11"/>
    </reaction>
</comment>
<comment type="pathway">
    <text evidence="1">Aminoacyl-tRNA biosynthesis; selenocysteinyl-tRNA(Sec) biosynthesis; L-seryl-tRNA(Sec) from L-serine and tRNA(Sec): step 1/1.</text>
</comment>
<comment type="subunit">
    <text evidence="1">Homodimer. The tRNA molecule binds across the dimer.</text>
</comment>
<comment type="subcellular location">
    <subcellularLocation>
        <location evidence="1">Cytoplasm</location>
    </subcellularLocation>
</comment>
<comment type="domain">
    <text evidence="1">Consists of two distinct domains, a catalytic core and a N-terminal extension that is involved in tRNA binding.</text>
</comment>
<comment type="similarity">
    <text evidence="1">Belongs to the class-II aminoacyl-tRNA synthetase family. Type-1 seryl-tRNA synthetase subfamily.</text>
</comment>
<keyword id="KW-0030">Aminoacyl-tRNA synthetase</keyword>
<keyword id="KW-0067">ATP-binding</keyword>
<keyword id="KW-0963">Cytoplasm</keyword>
<keyword id="KW-0436">Ligase</keyword>
<keyword id="KW-0547">Nucleotide-binding</keyword>
<keyword id="KW-0648">Protein biosynthesis</keyword>
<proteinExistence type="inferred from homology"/>
<evidence type="ECO:0000255" key="1">
    <source>
        <dbReference type="HAMAP-Rule" id="MF_00176"/>
    </source>
</evidence>
<name>SYS_METEP</name>
<organism>
    <name type="scientific">Methylorubrum extorquens (strain PA1)</name>
    <name type="common">Methylobacterium extorquens</name>
    <dbReference type="NCBI Taxonomy" id="419610"/>
    <lineage>
        <taxon>Bacteria</taxon>
        <taxon>Pseudomonadati</taxon>
        <taxon>Pseudomonadota</taxon>
        <taxon>Alphaproteobacteria</taxon>
        <taxon>Hyphomicrobiales</taxon>
        <taxon>Methylobacteriaceae</taxon>
        <taxon>Methylorubrum</taxon>
    </lineage>
</organism>
<gene>
    <name evidence="1" type="primary">serS</name>
    <name type="ordered locus">Mext_4234</name>
</gene>
<reference key="1">
    <citation type="submission" date="2007-12" db="EMBL/GenBank/DDBJ databases">
        <title>Complete sequence of Methylobacterium extorquens PA1.</title>
        <authorList>
            <consortium name="US DOE Joint Genome Institute"/>
            <person name="Copeland A."/>
            <person name="Lucas S."/>
            <person name="Lapidus A."/>
            <person name="Barry K."/>
            <person name="Glavina del Rio T."/>
            <person name="Dalin E."/>
            <person name="Tice H."/>
            <person name="Pitluck S."/>
            <person name="Saunders E."/>
            <person name="Brettin T."/>
            <person name="Bruce D."/>
            <person name="Detter J.C."/>
            <person name="Han C."/>
            <person name="Schmutz J."/>
            <person name="Larimer F."/>
            <person name="Land M."/>
            <person name="Hauser L."/>
            <person name="Kyrpides N."/>
            <person name="Kim E."/>
            <person name="Marx C."/>
            <person name="Richardson P."/>
        </authorList>
    </citation>
    <scope>NUCLEOTIDE SEQUENCE [LARGE SCALE GENOMIC DNA]</scope>
    <source>
        <strain>PA1</strain>
    </source>
</reference>